<proteinExistence type="evidence at protein level"/>
<keyword id="KW-0903">Direct protein sequencing</keyword>
<keyword id="KW-0472">Membrane</keyword>
<keyword id="KW-0496">Mitochondrion</keyword>
<keyword id="KW-0999">Mitochondrion inner membrane</keyword>
<feature type="chain" id="PRO_0000194919" description="Cytochrome c oxidase subunit 6B">
    <location>
        <begin position="1" status="less than"/>
        <end position="34" status="greater than"/>
    </location>
</feature>
<feature type="non-consecutive residues" evidence="3">
    <location>
        <begin position="19"/>
        <end position="20"/>
    </location>
</feature>
<feature type="non-terminal residue">
    <location>
        <position position="1"/>
    </location>
</feature>
<feature type="non-terminal residue">
    <location>
        <position position="34"/>
    </location>
</feature>
<accession>P80976</accession>
<accession>Q7LZJ5</accession>
<evidence type="ECO:0000250" key="1">
    <source>
        <dbReference type="UniProtKB" id="P00429"/>
    </source>
</evidence>
<evidence type="ECO:0000250" key="2">
    <source>
        <dbReference type="UniProtKB" id="Q01519"/>
    </source>
</evidence>
<evidence type="ECO:0000305" key="3"/>
<dbReference type="PIR" id="S77985">
    <property type="entry name" value="S77985"/>
</dbReference>
<dbReference type="SMR" id="P80976"/>
<dbReference type="UniPathway" id="UPA00705"/>
<dbReference type="GO" id="GO:0005743">
    <property type="term" value="C:mitochondrial inner membrane"/>
    <property type="evidence" value="ECO:0007669"/>
    <property type="project" value="UniProtKB-SubCell"/>
</dbReference>
<dbReference type="GO" id="GO:0006119">
    <property type="term" value="P:oxidative phosphorylation"/>
    <property type="evidence" value="ECO:0007669"/>
    <property type="project" value="UniProtKB-UniPathway"/>
</dbReference>
<dbReference type="InterPro" id="IPR036549">
    <property type="entry name" value="CX6/COA6-like_sf"/>
</dbReference>
<dbReference type="SUPFAM" id="SSF47694">
    <property type="entry name" value="Cytochrome c oxidase subunit h"/>
    <property type="match status" value="1"/>
</dbReference>
<sequence length="34" mass="4036">KALYAPFDATFPNQNQTRNKAVDTAPCEWYRRVY</sequence>
<name>COX6B_THUOB</name>
<comment type="function">
    <text evidence="2">Component of the cytochrome c oxidase, the last enzyme in the mitochondrial electron transport chain which drives oxidative phosphorylation. The respiratory chain contains 3 multisubunit complexes succinate dehydrogenase (complex II, CII), ubiquinol-cytochrome c oxidoreductase (cytochrome b-c1 complex, complex III, CIII) and cytochrome c oxidase (complex IV, CIV), that cooperate to transfer electrons derived from NADH and succinate to molecular oxygen, creating an electrochemical gradient over the inner membrane that drives transmembrane transport and the ATP synthase. Cytochrome c oxidase is the component of the respiratory chain that catalyzes the reduction of oxygen to water. Electrons originating from reduced cytochrome c in the intermembrane space (IMS) are transferred via the dinuclear copper A center (CU(A)) of subunit 2 and heme A of subunit 1 to the active site in subunit 1, a binuclear center (BNC) formed by heme A3 and copper B (CU(B)). The BNC reduces molecular oxygen to 2 water molecules using 4 electrons from cytochrome c in the IMS and 4 protons from the mitochondrial matrix.</text>
</comment>
<comment type="pathway">
    <text evidence="2">Energy metabolism; oxidative phosphorylation.</text>
</comment>
<comment type="subunit">
    <text evidence="1">Component of the cytochrome c oxidase (complex IV, CIV), a multisubunit enzyme composed of 14 subunits. The complex is composed of a catalytic core of 3 subunits MT-CO1, MT-CO2 and MT-CO3, encoded in the mitochondrial DNA, and 11 supernumerary subunits COX4I, COX5A, COX5B, COX6A, COX6B, COX6C, COX7A, COX7B, COX7C, COX8 and NDUFA4, which are encoded in the nuclear genome. The complex exists as a monomer or a dimer and forms supercomplexes (SCs) in the inner mitochondrial membrane with NADH-ubiquinone oxidoreductase (complex I, CI) and ubiquinol-cytochrome c oxidoreductase (cytochrome b-c1 complex, complex III, CIII), resulting in different assemblies (supercomplex SCI(1)III(2)IV(1) and megacomplex MCI(2)III(2)IV(2)).</text>
</comment>
<comment type="subcellular location">
    <subcellularLocation>
        <location evidence="1">Mitochondrion inner membrane</location>
        <topology evidence="1">Peripheral membrane protein</topology>
        <orientation evidence="1">Intermembrane side</orientation>
    </subcellularLocation>
</comment>
<comment type="PTM">
    <text>The N-terminus is blocked.</text>
</comment>
<comment type="similarity">
    <text evidence="3">Belongs to the cytochrome c oxidase subunit 6B family.</text>
</comment>
<reference key="1">
    <citation type="journal article" date="1997" name="Eur. J. Biochem.">
        <title>The subunit structure of cytochrome-c oxidase from tuna heart and liver.</title>
        <authorList>
            <person name="Arnold S."/>
            <person name="Lee I."/>
            <person name="Kim M."/>
            <person name="Song E."/>
            <person name="Linder D."/>
            <person name="Lottspeich F."/>
            <person name="Kadenbach B."/>
        </authorList>
    </citation>
    <scope>PROTEIN SEQUENCE</scope>
    <source>
        <tissue>Heart</tissue>
        <tissue>Liver</tissue>
    </source>
</reference>
<protein>
    <recommendedName>
        <fullName>Cytochrome c oxidase subunit 6B</fullName>
    </recommendedName>
    <alternativeName>
        <fullName>Cytochrome c oxidase subunit VIb</fullName>
        <shortName>COX VIb</shortName>
    </alternativeName>
</protein>
<organism>
    <name type="scientific">Thunnus obesus</name>
    <name type="common">Bigeye tuna</name>
    <dbReference type="NCBI Taxonomy" id="8241"/>
    <lineage>
        <taxon>Eukaryota</taxon>
        <taxon>Metazoa</taxon>
        <taxon>Chordata</taxon>
        <taxon>Craniata</taxon>
        <taxon>Vertebrata</taxon>
        <taxon>Euteleostomi</taxon>
        <taxon>Actinopterygii</taxon>
        <taxon>Neopterygii</taxon>
        <taxon>Teleostei</taxon>
        <taxon>Neoteleostei</taxon>
        <taxon>Acanthomorphata</taxon>
        <taxon>Pelagiaria</taxon>
        <taxon>Scombriformes</taxon>
        <taxon>Scombridae</taxon>
        <taxon>Thunnus</taxon>
    </lineage>
</organism>